<feature type="chain" id="PRO_0000293931" description="Small ribosomal subunit protein uS3">
    <location>
        <begin position="1"/>
        <end position="224"/>
    </location>
</feature>
<feature type="domain" description="KH type-2" evidence="1">
    <location>
        <begin position="20"/>
        <end position="89"/>
    </location>
</feature>
<accession>A3DNB3</accession>
<evidence type="ECO:0000255" key="1">
    <source>
        <dbReference type="HAMAP-Rule" id="MF_01309"/>
    </source>
</evidence>
<evidence type="ECO:0000305" key="2"/>
<name>RS3_STAMF</name>
<keyword id="KW-1185">Reference proteome</keyword>
<keyword id="KW-0687">Ribonucleoprotein</keyword>
<keyword id="KW-0689">Ribosomal protein</keyword>
<keyword id="KW-0694">RNA-binding</keyword>
<keyword id="KW-0699">rRNA-binding</keyword>
<sequence>MTRPRVKSYFIDYSLKKVMLDEFLANYFKDAGYAGMELYKTPTGYRVVIYAEYPGRIIGRGGSIIRKLMTIMQTHFGLENVNITVSPVPDPDLNARIVAFRIVRALEKEIPYRRVAMAMLRRVMEAGAVGAEIIISGKLRSERARYEKLKAGRIYKAGDMVDYVVDRAVGKALLKRGVYGVEVVIVRPHLKPPDYVEIKSVKPEELADLIPVEKEETNESISPQ</sequence>
<gene>
    <name evidence="1" type="primary">rps3</name>
    <name type="ordered locus">Smar_1025</name>
</gene>
<reference key="1">
    <citation type="journal article" date="2009" name="BMC Genomics">
        <title>The complete genome sequence of Staphylothermus marinus reveals differences in sulfur metabolism among heterotrophic Crenarchaeota.</title>
        <authorList>
            <person name="Anderson I.J."/>
            <person name="Dharmarajan L."/>
            <person name="Rodriguez J."/>
            <person name="Hooper S."/>
            <person name="Porat I."/>
            <person name="Ulrich L.E."/>
            <person name="Elkins J.G."/>
            <person name="Mavromatis K."/>
            <person name="Sun H."/>
            <person name="Land M."/>
            <person name="Lapidus A."/>
            <person name="Lucas S."/>
            <person name="Barry K."/>
            <person name="Huber H."/>
            <person name="Zhulin I.B."/>
            <person name="Whitman W.B."/>
            <person name="Mukhopadhyay B."/>
            <person name="Woese C."/>
            <person name="Bristow J."/>
            <person name="Kyrpides N."/>
        </authorList>
    </citation>
    <scope>NUCLEOTIDE SEQUENCE [LARGE SCALE GENOMIC DNA]</scope>
    <source>
        <strain>ATCC 43588 / DSM 3639 / JCM 9404 / F1</strain>
    </source>
</reference>
<reference key="2">
    <citation type="journal article" date="2009" name="Stand. Genomic Sci.">
        <title>Complete genome sequence of Staphylothermus marinus Stetter and Fiala 1986 type strain F1.</title>
        <authorList>
            <person name="Anderson I.J."/>
            <person name="Sun H."/>
            <person name="Lapidus A."/>
            <person name="Copeland A."/>
            <person name="Glavina Del Rio T."/>
            <person name="Tice H."/>
            <person name="Dalin E."/>
            <person name="Lucas S."/>
            <person name="Barry K."/>
            <person name="Land M."/>
            <person name="Richardson P."/>
            <person name="Huber H."/>
            <person name="Kyrpides N.C."/>
        </authorList>
    </citation>
    <scope>NUCLEOTIDE SEQUENCE [LARGE SCALE GENOMIC DNA]</scope>
    <source>
        <strain>ATCC 43588 / DSM 3639 / JCM 9404 / F1</strain>
    </source>
</reference>
<comment type="function">
    <text evidence="1">Binds the lower part of the 30S subunit head.</text>
</comment>
<comment type="subunit">
    <text evidence="1">Part of the 30S ribosomal subunit.</text>
</comment>
<comment type="similarity">
    <text evidence="1">Belongs to the universal ribosomal protein uS3 family.</text>
</comment>
<proteinExistence type="inferred from homology"/>
<protein>
    <recommendedName>
        <fullName evidence="1">Small ribosomal subunit protein uS3</fullName>
    </recommendedName>
    <alternativeName>
        <fullName evidence="2">30S ribosomal protein S3</fullName>
    </alternativeName>
</protein>
<dbReference type="EMBL" id="CP000575">
    <property type="protein sequence ID" value="ABN70123.1"/>
    <property type="molecule type" value="Genomic_DNA"/>
</dbReference>
<dbReference type="RefSeq" id="WP_011839314.1">
    <property type="nucleotide sequence ID" value="NC_009033.1"/>
</dbReference>
<dbReference type="SMR" id="A3DNB3"/>
<dbReference type="STRING" id="399550.Smar_1025"/>
<dbReference type="GeneID" id="4907927"/>
<dbReference type="KEGG" id="smr:Smar_1025"/>
<dbReference type="eggNOG" id="arCOG04097">
    <property type="taxonomic scope" value="Archaea"/>
</dbReference>
<dbReference type="HOGENOM" id="CLU_058591_1_1_2"/>
<dbReference type="OrthoDB" id="9126at2157"/>
<dbReference type="Proteomes" id="UP000000254">
    <property type="component" value="Chromosome"/>
</dbReference>
<dbReference type="GO" id="GO:0022627">
    <property type="term" value="C:cytosolic small ribosomal subunit"/>
    <property type="evidence" value="ECO:0007669"/>
    <property type="project" value="TreeGrafter"/>
</dbReference>
<dbReference type="GO" id="GO:0019843">
    <property type="term" value="F:rRNA binding"/>
    <property type="evidence" value="ECO:0007669"/>
    <property type="project" value="UniProtKB-UniRule"/>
</dbReference>
<dbReference type="GO" id="GO:0003735">
    <property type="term" value="F:structural constituent of ribosome"/>
    <property type="evidence" value="ECO:0007669"/>
    <property type="project" value="InterPro"/>
</dbReference>
<dbReference type="GO" id="GO:0006412">
    <property type="term" value="P:translation"/>
    <property type="evidence" value="ECO:0007669"/>
    <property type="project" value="UniProtKB-UniRule"/>
</dbReference>
<dbReference type="CDD" id="cd02411">
    <property type="entry name" value="KH-II_30S_S3_arch"/>
    <property type="match status" value="1"/>
</dbReference>
<dbReference type="Gene3D" id="3.30.300.20">
    <property type="match status" value="1"/>
</dbReference>
<dbReference type="Gene3D" id="3.30.1140.32">
    <property type="entry name" value="Ribosomal protein S3, C-terminal domain"/>
    <property type="match status" value="1"/>
</dbReference>
<dbReference type="HAMAP" id="MF_01309_A">
    <property type="entry name" value="Ribosomal_uS3_A"/>
    <property type="match status" value="1"/>
</dbReference>
<dbReference type="InterPro" id="IPR004087">
    <property type="entry name" value="KH_dom"/>
</dbReference>
<dbReference type="InterPro" id="IPR015946">
    <property type="entry name" value="KH_dom-like_a/b"/>
</dbReference>
<dbReference type="InterPro" id="IPR004044">
    <property type="entry name" value="KH_dom_type_2"/>
</dbReference>
<dbReference type="InterPro" id="IPR009019">
    <property type="entry name" value="KH_sf_prok-type"/>
</dbReference>
<dbReference type="InterPro" id="IPR036419">
    <property type="entry name" value="Ribosomal_S3_C_sf"/>
</dbReference>
<dbReference type="InterPro" id="IPR027488">
    <property type="entry name" value="Ribosomal_uS3_arc"/>
</dbReference>
<dbReference type="InterPro" id="IPR001351">
    <property type="entry name" value="Ribosomal_uS3_C"/>
</dbReference>
<dbReference type="InterPro" id="IPR005703">
    <property type="entry name" value="Ribosomal_uS3_euk/arc"/>
</dbReference>
<dbReference type="NCBIfam" id="NF003219">
    <property type="entry name" value="PRK04191.1"/>
    <property type="match status" value="1"/>
</dbReference>
<dbReference type="NCBIfam" id="TIGR01008">
    <property type="entry name" value="uS3_euk_arch"/>
    <property type="match status" value="1"/>
</dbReference>
<dbReference type="PANTHER" id="PTHR11760">
    <property type="entry name" value="30S/40S RIBOSOMAL PROTEIN S3"/>
    <property type="match status" value="1"/>
</dbReference>
<dbReference type="PANTHER" id="PTHR11760:SF32">
    <property type="entry name" value="SMALL RIBOSOMAL SUBUNIT PROTEIN US3"/>
    <property type="match status" value="1"/>
</dbReference>
<dbReference type="Pfam" id="PF07650">
    <property type="entry name" value="KH_2"/>
    <property type="match status" value="1"/>
</dbReference>
<dbReference type="Pfam" id="PF00189">
    <property type="entry name" value="Ribosomal_S3_C"/>
    <property type="match status" value="1"/>
</dbReference>
<dbReference type="SMART" id="SM00322">
    <property type="entry name" value="KH"/>
    <property type="match status" value="1"/>
</dbReference>
<dbReference type="SUPFAM" id="SSF54814">
    <property type="entry name" value="Prokaryotic type KH domain (KH-domain type II)"/>
    <property type="match status" value="1"/>
</dbReference>
<dbReference type="SUPFAM" id="SSF54821">
    <property type="entry name" value="Ribosomal protein S3 C-terminal domain"/>
    <property type="match status" value="1"/>
</dbReference>
<dbReference type="PROSITE" id="PS50823">
    <property type="entry name" value="KH_TYPE_2"/>
    <property type="match status" value="1"/>
</dbReference>
<organism>
    <name type="scientific">Staphylothermus marinus (strain ATCC 43588 / DSM 3639 / JCM 9404 / F1)</name>
    <dbReference type="NCBI Taxonomy" id="399550"/>
    <lineage>
        <taxon>Archaea</taxon>
        <taxon>Thermoproteota</taxon>
        <taxon>Thermoprotei</taxon>
        <taxon>Desulfurococcales</taxon>
        <taxon>Desulfurococcaceae</taxon>
        <taxon>Staphylothermus</taxon>
    </lineage>
</organism>